<accession>B4I298</accession>
<name>WRNXO_DROSE</name>
<keyword id="KW-0269">Exonuclease</keyword>
<keyword id="KW-0378">Hydrolase</keyword>
<keyword id="KW-0460">Magnesium</keyword>
<keyword id="KW-0479">Metal-binding</keyword>
<keyword id="KW-0540">Nuclease</keyword>
<keyword id="KW-0539">Nucleus</keyword>
<keyword id="KW-0597">Phosphoprotein</keyword>
<keyword id="KW-1185">Reference proteome</keyword>
<proteinExistence type="inferred from homology"/>
<reference evidence="6" key="1">
    <citation type="journal article" date="2007" name="Nature">
        <title>Evolution of genes and genomes on the Drosophila phylogeny.</title>
        <authorList>
            <consortium name="Drosophila 12 genomes consortium"/>
        </authorList>
    </citation>
    <scope>NUCLEOTIDE SEQUENCE [LARGE SCALE GENOMIC DNA]</scope>
    <source>
        <strain evidence="6">Rob3c / Tucson 14021-0248.25</strain>
    </source>
</reference>
<sequence>MERYLTKMPIKSKANEVPKKEAFAKKETPKVARKATKTDTPKELKDKENAGDDNTPKQTKGRPGRPAAKRKNLDTPDVKDEKIAMEEENPPKRRSSRLTRSTRSMAEDGSPSPEKEKPEKLPFIKYKGAIKYFTESQDIAASADDVLQWVEKQKDDVVPMAFDMEWPFSFQTGPGKSSVIQICVDEKCCYIYQLTNVKKLPAALVALINHPKVRLHGVNIKNDFRKLARDFPEVTAEPLIEKCVDLGLWCNEVCETGGRWSLERLTNFIAKKAMDKSKKVRMSKWHVIPLDENQLMYAAIDVYIGQVIYRELERREKVKIKNEEEFKEKNGDAAFKAMKTLGETFLTKINEVTL</sequence>
<gene>
    <name evidence="2" type="primary">WRNexo</name>
    <name type="ORF">GM18710</name>
</gene>
<comment type="function">
    <text evidence="2">Has exonuclease activity on both single-stranded and duplex templates bearing overhangs, but not blunt ended duplex DNA, and cleaves in a 3'-5' direction. Essential for the formation of DNA replication focal centers. Has an important role in maintaining genome stability.</text>
</comment>
<comment type="subcellular location">
    <subcellularLocation>
        <location evidence="2">Nucleus</location>
    </subcellularLocation>
</comment>
<comment type="similarity">
    <text evidence="5">Belongs to the WRNexo family.</text>
</comment>
<comment type="sequence caution" evidence="5">
    <conflict type="erroneous initiation">
        <sequence resource="EMBL-CDS" id="EDW54655"/>
    </conflict>
    <text>Truncated N-terminus.</text>
</comment>
<dbReference type="EC" id="3.1.11.-"/>
<dbReference type="EMBL" id="CH480820">
    <property type="protein sequence ID" value="EDW54655.1"/>
    <property type="status" value="ALT_INIT"/>
    <property type="molecule type" value="Genomic_DNA"/>
</dbReference>
<dbReference type="RefSeq" id="XP_002038237.1">
    <property type="nucleotide sequence ID" value="XM_002038201.1"/>
</dbReference>
<dbReference type="SMR" id="B4I298"/>
<dbReference type="STRING" id="7238.B4I298"/>
<dbReference type="EnsemblMetazoa" id="FBtr0201695">
    <property type="protein sequence ID" value="FBpp0200187"/>
    <property type="gene ID" value="FBgn0173615"/>
</dbReference>
<dbReference type="EnsemblMetazoa" id="XM_002038201.2">
    <property type="protein sequence ID" value="XP_002038237.2"/>
    <property type="gene ID" value="LOC6613768"/>
</dbReference>
<dbReference type="GeneID" id="6613768"/>
<dbReference type="KEGG" id="dse:6613768"/>
<dbReference type="ChiTaRS" id="WRNexo">
    <property type="organism name" value="fly"/>
</dbReference>
<dbReference type="Proteomes" id="UP000001292">
    <property type="component" value="Unassembled WGS sequence"/>
</dbReference>
<dbReference type="GO" id="GO:0005634">
    <property type="term" value="C:nucleus"/>
    <property type="evidence" value="ECO:0000250"/>
    <property type="project" value="UniProtKB"/>
</dbReference>
<dbReference type="GO" id="GO:0008408">
    <property type="term" value="F:3'-5' exonuclease activity"/>
    <property type="evidence" value="ECO:0000250"/>
    <property type="project" value="UniProtKB"/>
</dbReference>
<dbReference type="GO" id="GO:0046872">
    <property type="term" value="F:metal ion binding"/>
    <property type="evidence" value="ECO:0007669"/>
    <property type="project" value="UniProtKB-KW"/>
</dbReference>
<dbReference type="GO" id="GO:0003676">
    <property type="term" value="F:nucleic acid binding"/>
    <property type="evidence" value="ECO:0007669"/>
    <property type="project" value="InterPro"/>
</dbReference>
<dbReference type="GO" id="GO:0045950">
    <property type="term" value="P:negative regulation of mitotic recombination"/>
    <property type="evidence" value="ECO:0000250"/>
    <property type="project" value="UniProtKB"/>
</dbReference>
<dbReference type="GO" id="GO:0006139">
    <property type="term" value="P:nucleobase-containing compound metabolic process"/>
    <property type="evidence" value="ECO:0007669"/>
    <property type="project" value="InterPro"/>
</dbReference>
<dbReference type="CDD" id="cd06141">
    <property type="entry name" value="WRN_exo"/>
    <property type="match status" value="1"/>
</dbReference>
<dbReference type="FunFam" id="3.30.420.10:FF:000104">
    <property type="entry name" value="Werner Syndrome-like exonuclease"/>
    <property type="match status" value="1"/>
</dbReference>
<dbReference type="Gene3D" id="3.30.420.10">
    <property type="entry name" value="Ribonuclease H-like superfamily/Ribonuclease H"/>
    <property type="match status" value="1"/>
</dbReference>
<dbReference type="InterPro" id="IPR002562">
    <property type="entry name" value="3'-5'_exonuclease_dom"/>
</dbReference>
<dbReference type="InterPro" id="IPR051132">
    <property type="entry name" value="3-5_Exonuclease_domain"/>
</dbReference>
<dbReference type="InterPro" id="IPR012337">
    <property type="entry name" value="RNaseH-like_sf"/>
</dbReference>
<dbReference type="InterPro" id="IPR036397">
    <property type="entry name" value="RNaseH_sf"/>
</dbReference>
<dbReference type="PANTHER" id="PTHR13620:SF109">
    <property type="entry name" value="3'-5' EXONUCLEASE"/>
    <property type="match status" value="1"/>
</dbReference>
<dbReference type="PANTHER" id="PTHR13620">
    <property type="entry name" value="3-5 EXONUCLEASE"/>
    <property type="match status" value="1"/>
</dbReference>
<dbReference type="Pfam" id="PF01612">
    <property type="entry name" value="DNA_pol_A_exo1"/>
    <property type="match status" value="1"/>
</dbReference>
<dbReference type="SMART" id="SM00474">
    <property type="entry name" value="35EXOc"/>
    <property type="match status" value="1"/>
</dbReference>
<dbReference type="SUPFAM" id="SSF53098">
    <property type="entry name" value="Ribonuclease H-like"/>
    <property type="match status" value="1"/>
</dbReference>
<feature type="chain" id="PRO_0000399380" description="3'-5' exonuclease">
    <location>
        <begin position="1"/>
        <end position="354"/>
    </location>
</feature>
<feature type="domain" description="3'-5' exonuclease" evidence="3">
    <location>
        <begin position="149"/>
        <end position="314"/>
    </location>
</feature>
<feature type="region of interest" description="Disordered" evidence="4">
    <location>
        <begin position="1"/>
        <end position="120"/>
    </location>
</feature>
<feature type="compositionally biased region" description="Basic and acidic residues" evidence="4">
    <location>
        <begin position="13"/>
        <end position="50"/>
    </location>
</feature>
<feature type="compositionally biased region" description="Basic residues" evidence="4">
    <location>
        <begin position="59"/>
        <end position="70"/>
    </location>
</feature>
<feature type="compositionally biased region" description="Basic and acidic residues" evidence="4">
    <location>
        <begin position="71"/>
        <end position="91"/>
    </location>
</feature>
<feature type="binding site" evidence="2">
    <location>
        <position position="163"/>
    </location>
    <ligand>
        <name>Mg(2+)</name>
        <dbReference type="ChEBI" id="CHEBI:18420"/>
        <label>1</label>
        <note>catalytic</note>
    </ligand>
</feature>
<feature type="binding site" evidence="2">
    <location>
        <position position="163"/>
    </location>
    <ligand>
        <name>Mg(2+)</name>
        <dbReference type="ChEBI" id="CHEBI:18420"/>
        <label>2</label>
        <note>catalytic</note>
    </ligand>
</feature>
<feature type="binding site" evidence="2">
    <location>
        <position position="165"/>
    </location>
    <ligand>
        <name>Mg(2+)</name>
        <dbReference type="ChEBI" id="CHEBI:18420"/>
        <label>1</label>
        <note>catalytic</note>
    </ligand>
</feature>
<feature type="binding site" evidence="1">
    <location>
        <position position="301"/>
    </location>
    <ligand>
        <name>Mg(2+)</name>
        <dbReference type="ChEBI" id="CHEBI:18420"/>
        <label>1</label>
        <note>catalytic</note>
    </ligand>
</feature>
<feature type="modified residue" description="Phosphoserine" evidence="2">
    <location>
        <position position="104"/>
    </location>
</feature>
<feature type="modified residue" description="Phosphoserine" evidence="2">
    <location>
        <position position="110"/>
    </location>
</feature>
<feature type="modified residue" description="Phosphoserine" evidence="2">
    <location>
        <position position="112"/>
    </location>
</feature>
<organism>
    <name type="scientific">Drosophila sechellia</name>
    <name type="common">Fruit fly</name>
    <dbReference type="NCBI Taxonomy" id="7238"/>
    <lineage>
        <taxon>Eukaryota</taxon>
        <taxon>Metazoa</taxon>
        <taxon>Ecdysozoa</taxon>
        <taxon>Arthropoda</taxon>
        <taxon>Hexapoda</taxon>
        <taxon>Insecta</taxon>
        <taxon>Pterygota</taxon>
        <taxon>Neoptera</taxon>
        <taxon>Endopterygota</taxon>
        <taxon>Diptera</taxon>
        <taxon>Brachycera</taxon>
        <taxon>Muscomorpha</taxon>
        <taxon>Ephydroidea</taxon>
        <taxon>Drosophilidae</taxon>
        <taxon>Drosophila</taxon>
        <taxon>Sophophora</taxon>
    </lineage>
</organism>
<protein>
    <recommendedName>
        <fullName evidence="2">3'-5' exonuclease</fullName>
        <ecNumber>3.1.11.-</ecNumber>
    </recommendedName>
    <alternativeName>
        <fullName>Werner Syndrome-like exonuclease</fullName>
    </alternativeName>
</protein>
<evidence type="ECO:0000250" key="1">
    <source>
        <dbReference type="UniProtKB" id="Q14191"/>
    </source>
</evidence>
<evidence type="ECO:0000250" key="2">
    <source>
        <dbReference type="UniProtKB" id="Q9VE86"/>
    </source>
</evidence>
<evidence type="ECO:0000255" key="3"/>
<evidence type="ECO:0000256" key="4">
    <source>
        <dbReference type="SAM" id="MobiDB-lite"/>
    </source>
</evidence>
<evidence type="ECO:0000305" key="5"/>
<evidence type="ECO:0000312" key="6">
    <source>
        <dbReference type="EMBL" id="EDW54655.1"/>
    </source>
</evidence>